<proteinExistence type="inferred from homology"/>
<gene>
    <name evidence="1" type="primary">gcvP</name>
    <name type="ordered locus">PSPTO_1276</name>
</gene>
<accession>Q887L5</accession>
<organism>
    <name type="scientific">Pseudomonas syringae pv. tomato (strain ATCC BAA-871 / DC3000)</name>
    <dbReference type="NCBI Taxonomy" id="223283"/>
    <lineage>
        <taxon>Bacteria</taxon>
        <taxon>Pseudomonadati</taxon>
        <taxon>Pseudomonadota</taxon>
        <taxon>Gammaproteobacteria</taxon>
        <taxon>Pseudomonadales</taxon>
        <taxon>Pseudomonadaceae</taxon>
        <taxon>Pseudomonas</taxon>
    </lineage>
</organism>
<evidence type="ECO:0000255" key="1">
    <source>
        <dbReference type="HAMAP-Rule" id="MF_00711"/>
    </source>
</evidence>
<name>GCSP_PSESM</name>
<dbReference type="EC" id="1.4.4.2" evidence="1"/>
<dbReference type="EMBL" id="AE016853">
    <property type="protein sequence ID" value="AAO54801.1"/>
    <property type="molecule type" value="Genomic_DNA"/>
</dbReference>
<dbReference type="RefSeq" id="NP_791106.1">
    <property type="nucleotide sequence ID" value="NC_004578.1"/>
</dbReference>
<dbReference type="RefSeq" id="WP_005764078.1">
    <property type="nucleotide sequence ID" value="NC_004578.1"/>
</dbReference>
<dbReference type="SMR" id="Q887L5"/>
<dbReference type="STRING" id="223283.PSPTO_1276"/>
<dbReference type="GeneID" id="1182912"/>
<dbReference type="KEGG" id="pst:PSPTO_1276"/>
<dbReference type="PATRIC" id="fig|223283.9.peg.1298"/>
<dbReference type="eggNOG" id="COG0403">
    <property type="taxonomic scope" value="Bacteria"/>
</dbReference>
<dbReference type="eggNOG" id="COG1003">
    <property type="taxonomic scope" value="Bacteria"/>
</dbReference>
<dbReference type="HOGENOM" id="CLU_004620_1_1_6"/>
<dbReference type="OrthoDB" id="9801272at2"/>
<dbReference type="PhylomeDB" id="Q887L5"/>
<dbReference type="Proteomes" id="UP000002515">
    <property type="component" value="Chromosome"/>
</dbReference>
<dbReference type="GO" id="GO:0005829">
    <property type="term" value="C:cytosol"/>
    <property type="evidence" value="ECO:0007669"/>
    <property type="project" value="TreeGrafter"/>
</dbReference>
<dbReference type="GO" id="GO:0005960">
    <property type="term" value="C:glycine cleavage complex"/>
    <property type="evidence" value="ECO:0007669"/>
    <property type="project" value="TreeGrafter"/>
</dbReference>
<dbReference type="GO" id="GO:0016594">
    <property type="term" value="F:glycine binding"/>
    <property type="evidence" value="ECO:0007669"/>
    <property type="project" value="TreeGrafter"/>
</dbReference>
<dbReference type="GO" id="GO:0004375">
    <property type="term" value="F:glycine dehydrogenase (decarboxylating) activity"/>
    <property type="evidence" value="ECO:0007669"/>
    <property type="project" value="UniProtKB-EC"/>
</dbReference>
<dbReference type="GO" id="GO:0030170">
    <property type="term" value="F:pyridoxal phosphate binding"/>
    <property type="evidence" value="ECO:0007669"/>
    <property type="project" value="TreeGrafter"/>
</dbReference>
<dbReference type="GO" id="GO:0019464">
    <property type="term" value="P:glycine decarboxylation via glycine cleavage system"/>
    <property type="evidence" value="ECO:0007669"/>
    <property type="project" value="UniProtKB-UniRule"/>
</dbReference>
<dbReference type="CDD" id="cd00613">
    <property type="entry name" value="GDC-P"/>
    <property type="match status" value="1"/>
</dbReference>
<dbReference type="FunFam" id="3.40.640.10:FF:000005">
    <property type="entry name" value="Glycine dehydrogenase (decarboxylating), mitochondrial"/>
    <property type="match status" value="1"/>
</dbReference>
<dbReference type="FunFam" id="3.90.1150.10:FF:000007">
    <property type="entry name" value="Glycine dehydrogenase (decarboxylating), mitochondrial"/>
    <property type="match status" value="1"/>
</dbReference>
<dbReference type="FunFam" id="3.40.640.10:FF:000007">
    <property type="entry name" value="glycine dehydrogenase (Decarboxylating), mitochondrial"/>
    <property type="match status" value="1"/>
</dbReference>
<dbReference type="Gene3D" id="3.90.1150.10">
    <property type="entry name" value="Aspartate Aminotransferase, domain 1"/>
    <property type="match status" value="2"/>
</dbReference>
<dbReference type="Gene3D" id="3.40.640.10">
    <property type="entry name" value="Type I PLP-dependent aspartate aminotransferase-like (Major domain)"/>
    <property type="match status" value="2"/>
</dbReference>
<dbReference type="HAMAP" id="MF_00711">
    <property type="entry name" value="GcvP"/>
    <property type="match status" value="1"/>
</dbReference>
<dbReference type="InterPro" id="IPR003437">
    <property type="entry name" value="GcvP"/>
</dbReference>
<dbReference type="InterPro" id="IPR049316">
    <property type="entry name" value="GDC-P_C"/>
</dbReference>
<dbReference type="InterPro" id="IPR049315">
    <property type="entry name" value="GDC-P_N"/>
</dbReference>
<dbReference type="InterPro" id="IPR020581">
    <property type="entry name" value="GDC_P"/>
</dbReference>
<dbReference type="InterPro" id="IPR015424">
    <property type="entry name" value="PyrdxlP-dep_Trfase"/>
</dbReference>
<dbReference type="InterPro" id="IPR015421">
    <property type="entry name" value="PyrdxlP-dep_Trfase_major"/>
</dbReference>
<dbReference type="InterPro" id="IPR015422">
    <property type="entry name" value="PyrdxlP-dep_Trfase_small"/>
</dbReference>
<dbReference type="NCBIfam" id="TIGR00461">
    <property type="entry name" value="gcvP"/>
    <property type="match status" value="1"/>
</dbReference>
<dbReference type="NCBIfam" id="NF003346">
    <property type="entry name" value="PRK04366.1"/>
    <property type="match status" value="1"/>
</dbReference>
<dbReference type="PANTHER" id="PTHR11773:SF1">
    <property type="entry name" value="GLYCINE DEHYDROGENASE (DECARBOXYLATING), MITOCHONDRIAL"/>
    <property type="match status" value="1"/>
</dbReference>
<dbReference type="PANTHER" id="PTHR11773">
    <property type="entry name" value="GLYCINE DEHYDROGENASE, DECARBOXYLATING"/>
    <property type="match status" value="1"/>
</dbReference>
<dbReference type="Pfam" id="PF21478">
    <property type="entry name" value="GcvP2_C"/>
    <property type="match status" value="1"/>
</dbReference>
<dbReference type="Pfam" id="PF02347">
    <property type="entry name" value="GDC-P"/>
    <property type="match status" value="2"/>
</dbReference>
<dbReference type="SUPFAM" id="SSF53383">
    <property type="entry name" value="PLP-dependent transferases"/>
    <property type="match status" value="2"/>
</dbReference>
<reference key="1">
    <citation type="journal article" date="2003" name="Proc. Natl. Acad. Sci. U.S.A.">
        <title>The complete genome sequence of the Arabidopsis and tomato pathogen Pseudomonas syringae pv. tomato DC3000.</title>
        <authorList>
            <person name="Buell C.R."/>
            <person name="Joardar V."/>
            <person name="Lindeberg M."/>
            <person name="Selengut J."/>
            <person name="Paulsen I.T."/>
            <person name="Gwinn M.L."/>
            <person name="Dodson R.J."/>
            <person name="DeBoy R.T."/>
            <person name="Durkin A.S."/>
            <person name="Kolonay J.F."/>
            <person name="Madupu R."/>
            <person name="Daugherty S.C."/>
            <person name="Brinkac L.M."/>
            <person name="Beanan M.J."/>
            <person name="Haft D.H."/>
            <person name="Nelson W.C."/>
            <person name="Davidsen T.M."/>
            <person name="Zafar N."/>
            <person name="Zhou L."/>
            <person name="Liu J."/>
            <person name="Yuan Q."/>
            <person name="Khouri H.M."/>
            <person name="Fedorova N.B."/>
            <person name="Tran B."/>
            <person name="Russell D."/>
            <person name="Berry K.J."/>
            <person name="Utterback T.R."/>
            <person name="Van Aken S.E."/>
            <person name="Feldblyum T.V."/>
            <person name="D'Ascenzo M."/>
            <person name="Deng W.-L."/>
            <person name="Ramos A.R."/>
            <person name="Alfano J.R."/>
            <person name="Cartinhour S."/>
            <person name="Chatterjee A.K."/>
            <person name="Delaney T.P."/>
            <person name="Lazarowitz S.G."/>
            <person name="Martin G.B."/>
            <person name="Schneider D.J."/>
            <person name="Tang X."/>
            <person name="Bender C.L."/>
            <person name="White O."/>
            <person name="Fraser C.M."/>
            <person name="Collmer A."/>
        </authorList>
    </citation>
    <scope>NUCLEOTIDE SEQUENCE [LARGE SCALE GENOMIC DNA]</scope>
    <source>
        <strain>ATCC BAA-871 / DC3000</strain>
    </source>
</reference>
<protein>
    <recommendedName>
        <fullName evidence="1">Glycine dehydrogenase (decarboxylating)</fullName>
        <ecNumber evidence="1">1.4.4.2</ecNumber>
    </recommendedName>
    <alternativeName>
        <fullName evidence="1">Glycine cleavage system P-protein</fullName>
    </alternativeName>
    <alternativeName>
        <fullName evidence="1">Glycine decarboxylase</fullName>
    </alternativeName>
    <alternativeName>
        <fullName evidence="1">Glycine dehydrogenase (aminomethyl-transferring)</fullName>
    </alternativeName>
</protein>
<sequence>MTDRIELTTANEFIARHIGPRAADELAMLHTLGFDSIEALSDSVIPESIKGTSVLNLPAGQSEADALASIKAIASKNQLFKTYIGQGYYNTHTPAPILRNLLENPAWYTAYTPYQPEISQGRLESLLNFQTLISDLTGLPIANASLLDEATAAAEAMTFCKRLSKNKGSQQFFASSHCHPQTLDVLRTRAEPLGITVVVADETELGDVSDYFGALLQYPASNGDVFDYRELAERFHGANALVAVAADLLALTLLTPPGEFGADVAIGSAQRFGVPLGFGGPHAAYFSTRDAFKRDMPGRLVGVSVDRHGKQALRLAMQTREQHIRREKATSNICTAQVLLANIASMYAVYHGPRGLTQIANRVHHLTAILAEGLSQLGLNAEQAYFFDSLTLHTGGRTAALHAAARARHINLREIDDQRLGLSLDETTSQSAVEVLWDIFASTGQTLPDFTALAASVKSRLPAALLRQSAILSHPVFNRYHSETELMRYLRKLADKDLALDRTMIPLGSCTMKLNAASEMIPVTWAEFGNLHPFAPAEQSAGYQQLTDELEAMLCAATGYDAISLQPNAGSQGEYAGLLAIRAYHQSRGDEHRDICLIPSSAHGTNPATANMAGMRVVVTACDARGNVDIEDLRAKALQHREQLAAIMITYPSTHGVFEEGIREICGIVHDNGGQVYIDGANMNAMVGLCAPGKFGGDVSHLNLHKTFCIPHGGGGPGVGPIGVKSHLAPFMPGHARMQRKEGAVCAAPFGSASILPITWMYIRMMGGEGLKRASQLAILNANYISRRLEEHYPVLYTGTNGLVAHECILDLRPIKDSSGISVDDVAKRLIDFGFHAPTMSFPVAGTLMIEPTESESREELDRFCDAMIKIREEIRAVEDGTLDKDDNPLKNAPHTAAEIVGQWSHPYSREQAVYPVDSLIENKYWPPVGRVDNVFGDRNLVCACPSIESYQEA</sequence>
<keyword id="KW-0560">Oxidoreductase</keyword>
<keyword id="KW-0663">Pyridoxal phosphate</keyword>
<keyword id="KW-1185">Reference proteome</keyword>
<comment type="function">
    <text evidence="1">The glycine cleavage system catalyzes the degradation of glycine. The P protein binds the alpha-amino group of glycine through its pyridoxal phosphate cofactor; CO(2) is released and the remaining methylamine moiety is then transferred to the lipoamide cofactor of the H protein.</text>
</comment>
<comment type="catalytic activity">
    <reaction evidence="1">
        <text>N(6)-[(R)-lipoyl]-L-lysyl-[glycine-cleavage complex H protein] + glycine + H(+) = N(6)-[(R)-S(8)-aminomethyldihydrolipoyl]-L-lysyl-[glycine-cleavage complex H protein] + CO2</text>
        <dbReference type="Rhea" id="RHEA:24304"/>
        <dbReference type="Rhea" id="RHEA-COMP:10494"/>
        <dbReference type="Rhea" id="RHEA-COMP:10495"/>
        <dbReference type="ChEBI" id="CHEBI:15378"/>
        <dbReference type="ChEBI" id="CHEBI:16526"/>
        <dbReference type="ChEBI" id="CHEBI:57305"/>
        <dbReference type="ChEBI" id="CHEBI:83099"/>
        <dbReference type="ChEBI" id="CHEBI:83143"/>
        <dbReference type="EC" id="1.4.4.2"/>
    </reaction>
</comment>
<comment type="cofactor">
    <cofactor evidence="1">
        <name>pyridoxal 5'-phosphate</name>
        <dbReference type="ChEBI" id="CHEBI:597326"/>
    </cofactor>
</comment>
<comment type="subunit">
    <text evidence="1">The glycine cleavage system is composed of four proteins: P, T, L and H.</text>
</comment>
<comment type="similarity">
    <text evidence="1">Belongs to the GcvP family.</text>
</comment>
<feature type="chain" id="PRO_0000166929" description="Glycine dehydrogenase (decarboxylating)">
    <location>
        <begin position="1"/>
        <end position="954"/>
    </location>
</feature>
<feature type="modified residue" description="N6-(pyridoxal phosphate)lysine" evidence="1">
    <location>
        <position position="706"/>
    </location>
</feature>